<proteinExistence type="evidence at protein level"/>
<feature type="chain" id="PRO_0000183260" description="CDP-paratose 2-epimerase">
    <location>
        <begin position="1"/>
        <end position="338"/>
    </location>
</feature>
<feature type="active site" description="Proton acceptor">
    <location>
        <position position="164"/>
    </location>
</feature>
<feature type="binding site" evidence="1">
    <location>
        <position position="124"/>
    </location>
    <ligand>
        <name>substrate</name>
    </ligand>
</feature>
<feature type="strand" evidence="3">
    <location>
        <begin position="2"/>
        <end position="6"/>
    </location>
</feature>
<feature type="turn" evidence="3">
    <location>
        <begin position="7"/>
        <end position="9"/>
    </location>
</feature>
<feature type="helix" evidence="3">
    <location>
        <begin position="11"/>
        <end position="22"/>
    </location>
</feature>
<feature type="strand" evidence="3">
    <location>
        <begin position="26"/>
        <end position="31"/>
    </location>
</feature>
<feature type="helix" evidence="3">
    <location>
        <begin position="38"/>
        <end position="46"/>
    </location>
</feature>
<feature type="strand" evidence="3">
    <location>
        <begin position="52"/>
        <end position="55"/>
    </location>
</feature>
<feature type="helix" evidence="3">
    <location>
        <begin position="61"/>
        <end position="71"/>
    </location>
</feature>
<feature type="strand" evidence="3">
    <location>
        <begin position="74"/>
        <end position="78"/>
    </location>
</feature>
<feature type="helix" evidence="3">
    <location>
        <begin position="85"/>
        <end position="90"/>
    </location>
</feature>
<feature type="helix" evidence="3">
    <location>
        <begin position="92"/>
        <end position="113"/>
    </location>
</feature>
<feature type="strand" evidence="3">
    <location>
        <begin position="118"/>
        <end position="124"/>
    </location>
</feature>
<feature type="helix" evidence="3">
    <location>
        <begin position="125"/>
        <end position="128"/>
    </location>
</feature>
<feature type="strand" evidence="3">
    <location>
        <begin position="136"/>
        <end position="138"/>
    </location>
</feature>
<feature type="strand" evidence="3">
    <location>
        <begin position="143"/>
        <end position="145"/>
    </location>
</feature>
<feature type="helix" evidence="3">
    <location>
        <begin position="162"/>
        <end position="182"/>
    </location>
</feature>
<feature type="strand" evidence="3">
    <location>
        <begin position="185"/>
        <end position="191"/>
    </location>
</feature>
<feature type="helix" evidence="3">
    <location>
        <begin position="207"/>
        <end position="219"/>
    </location>
</feature>
<feature type="strand" evidence="3">
    <location>
        <begin position="226"/>
        <end position="232"/>
    </location>
</feature>
<feature type="strand" evidence="3">
    <location>
        <begin position="235"/>
        <end position="237"/>
    </location>
</feature>
<feature type="helix" evidence="3">
    <location>
        <begin position="241"/>
        <end position="253"/>
    </location>
</feature>
<feature type="helix" evidence="3">
    <location>
        <begin position="255"/>
        <end position="258"/>
    </location>
</feature>
<feature type="strand" evidence="3">
    <location>
        <begin position="262"/>
        <end position="267"/>
    </location>
</feature>
<feature type="helix" evidence="3">
    <location>
        <begin position="269"/>
        <end position="271"/>
    </location>
</feature>
<feature type="strand" evidence="3">
    <location>
        <begin position="272"/>
        <end position="274"/>
    </location>
</feature>
<feature type="helix" evidence="3">
    <location>
        <begin position="275"/>
        <end position="286"/>
    </location>
</feature>
<feature type="strand" evidence="3">
    <location>
        <begin position="292"/>
        <end position="295"/>
    </location>
</feature>
<feature type="strand" evidence="3">
    <location>
        <begin position="303"/>
        <end position="305"/>
    </location>
</feature>
<feature type="helix" evidence="3">
    <location>
        <begin position="310"/>
        <end position="316"/>
    </location>
</feature>
<feature type="helix" evidence="3">
    <location>
        <begin position="324"/>
        <end position="337"/>
    </location>
</feature>
<gene>
    <name type="primary">rfbE</name>
    <name type="ordered locus">STY2298</name>
    <name type="ordered locus">t0784</name>
</gene>
<organism>
    <name type="scientific">Salmonella typhi</name>
    <dbReference type="NCBI Taxonomy" id="90370"/>
    <lineage>
        <taxon>Bacteria</taxon>
        <taxon>Pseudomonadati</taxon>
        <taxon>Pseudomonadota</taxon>
        <taxon>Gammaproteobacteria</taxon>
        <taxon>Enterobacterales</taxon>
        <taxon>Enterobacteriaceae</taxon>
        <taxon>Salmonella</taxon>
    </lineage>
</organism>
<keyword id="KW-0002">3D-structure</keyword>
<keyword id="KW-0413">Isomerase</keyword>
<keyword id="KW-0448">Lipopolysaccharide biosynthesis</keyword>
<protein>
    <recommendedName>
        <fullName>CDP-paratose 2-epimerase</fullName>
        <ecNumber>5.1.3.10</ecNumber>
    </recommendedName>
    <alternativeName>
        <fullName>CDP-tyvelose 2-epimerase</fullName>
    </alternativeName>
</protein>
<accession>P14169</accession>
<dbReference type="EC" id="5.1.3.10"/>
<dbReference type="EMBL" id="M29682">
    <property type="protein sequence ID" value="AAB49384.1"/>
    <property type="molecule type" value="Genomic_DNA"/>
</dbReference>
<dbReference type="EMBL" id="AL513382">
    <property type="protein sequence ID" value="CAD02451.1"/>
    <property type="molecule type" value="Genomic_DNA"/>
</dbReference>
<dbReference type="EMBL" id="AE014613">
    <property type="protein sequence ID" value="AAO68475.1"/>
    <property type="molecule type" value="Genomic_DNA"/>
</dbReference>
<dbReference type="PIR" id="B33604">
    <property type="entry name" value="B33604"/>
</dbReference>
<dbReference type="RefSeq" id="NP_456637.1">
    <property type="nucleotide sequence ID" value="NC_003198.1"/>
</dbReference>
<dbReference type="RefSeq" id="WP_000770936.1">
    <property type="nucleotide sequence ID" value="NZ_WSUR01000002.1"/>
</dbReference>
<dbReference type="PDB" id="1ORR">
    <property type="method" value="X-ray"/>
    <property type="resolution" value="1.50 A"/>
    <property type="chains" value="A/B/C/D=2-338"/>
</dbReference>
<dbReference type="PDBsum" id="1ORR"/>
<dbReference type="SMR" id="P14169"/>
<dbReference type="STRING" id="220341.gene:17586206"/>
<dbReference type="DrugBank" id="DB04555">
    <property type="generic name" value="Cytidine-5'-Diphosphate"/>
</dbReference>
<dbReference type="KEGG" id="stt:t0784"/>
<dbReference type="KEGG" id="sty:STY2298"/>
<dbReference type="PATRIC" id="fig|220341.7.peg.2318"/>
<dbReference type="eggNOG" id="COG0451">
    <property type="taxonomic scope" value="Bacteria"/>
</dbReference>
<dbReference type="HOGENOM" id="CLU_007383_1_7_6"/>
<dbReference type="OMA" id="VEDQGWV"/>
<dbReference type="OrthoDB" id="9803010at2"/>
<dbReference type="BioCyc" id="MetaCyc:MONOMER-13795"/>
<dbReference type="UniPathway" id="UPA00055">
    <property type="reaction ID" value="UER00515"/>
</dbReference>
<dbReference type="EvolutionaryTrace" id="P14169"/>
<dbReference type="Proteomes" id="UP000000541">
    <property type="component" value="Chromosome"/>
</dbReference>
<dbReference type="Proteomes" id="UP000002670">
    <property type="component" value="Chromosome"/>
</dbReference>
<dbReference type="GO" id="GO:0047732">
    <property type="term" value="F:CDP-abequose epimerase activity"/>
    <property type="evidence" value="ECO:0007669"/>
    <property type="project" value="UniProtKB-EC"/>
</dbReference>
<dbReference type="GO" id="GO:0009103">
    <property type="term" value="P:lipopolysaccharide biosynthetic process"/>
    <property type="evidence" value="ECO:0007669"/>
    <property type="project" value="UniProtKB-KW"/>
</dbReference>
<dbReference type="CDD" id="cd05258">
    <property type="entry name" value="CDP_TE_SDR_e"/>
    <property type="match status" value="1"/>
</dbReference>
<dbReference type="Gene3D" id="3.40.50.720">
    <property type="entry name" value="NAD(P)-binding Rossmann-like Domain"/>
    <property type="match status" value="1"/>
</dbReference>
<dbReference type="InterPro" id="IPR016040">
    <property type="entry name" value="NAD(P)-bd_dom"/>
</dbReference>
<dbReference type="InterPro" id="IPR036291">
    <property type="entry name" value="NAD(P)-bd_dom_sf"/>
</dbReference>
<dbReference type="PANTHER" id="PTHR43000">
    <property type="entry name" value="DTDP-D-GLUCOSE 4,6-DEHYDRATASE-RELATED"/>
    <property type="match status" value="1"/>
</dbReference>
<dbReference type="Pfam" id="PF16363">
    <property type="entry name" value="GDP_Man_Dehyd"/>
    <property type="match status" value="1"/>
</dbReference>
<dbReference type="SUPFAM" id="SSF51735">
    <property type="entry name" value="NAD(P)-binding Rossmann-fold domains"/>
    <property type="match status" value="1"/>
</dbReference>
<sequence length="338" mass="37958">MKLLITGGCGFLGSNLASFALSQGIDLIVFDNLSRKGATDNLHWLSSLGNFEFVHGDIRNKNDVTRLITKYMPDSCFHLAGQVAMTTSIDNPCMDFEINVGGTLNLLEAVRQYNSNCNIIYSSTNKVYGDLEQYKYNETETRYTCVDKPNGYDESTQLDFHSPYGCSKGAADQYMLDYARIFGLNTVVFRHSSMYGGRQFATYDQGWVGWFCQKAVEIKNGINKPFTISGNGKQVRDVLHAEDMISLYFTALANVSKIRGNAFNIGGTIVNSLSLLELFKLLEDYCNIDMRFTNLPVRESDQRVFVADIKKITNAIDWSPKVSAKDGVQKMYDWTSSI</sequence>
<name>RFBE_SALTI</name>
<evidence type="ECO:0000269" key="1">
    <source>
    </source>
</evidence>
<evidence type="ECO:0000305" key="2"/>
<evidence type="ECO:0007829" key="3">
    <source>
        <dbReference type="PDB" id="1ORR"/>
    </source>
</evidence>
<reference key="1">
    <citation type="journal article" date="1989" name="J. Bacteriol.">
        <title>Identification and sequence of rfbS and rfbE, which determine antigenic specificity of group A and group D salmonellae.</title>
        <authorList>
            <person name="Verma N."/>
            <person name="Reeves P.R."/>
        </authorList>
    </citation>
    <scope>NUCLEOTIDE SEQUENCE [GENOMIC DNA]</scope>
    <source>
        <strain>ATCC 700931 / Ty2</strain>
    </source>
</reference>
<reference key="2">
    <citation type="submission" date="1995-06" db="EMBL/GenBank/DDBJ databases">
        <authorList>
            <person name="Reeves P.R."/>
        </authorList>
    </citation>
    <scope>SEQUENCE REVISION</scope>
</reference>
<reference key="3">
    <citation type="journal article" date="2001" name="Nature">
        <title>Complete genome sequence of a multiple drug resistant Salmonella enterica serovar Typhi CT18.</title>
        <authorList>
            <person name="Parkhill J."/>
            <person name="Dougan G."/>
            <person name="James K.D."/>
            <person name="Thomson N.R."/>
            <person name="Pickard D."/>
            <person name="Wain J."/>
            <person name="Churcher C.M."/>
            <person name="Mungall K.L."/>
            <person name="Bentley S.D."/>
            <person name="Holden M.T.G."/>
            <person name="Sebaihia M."/>
            <person name="Baker S."/>
            <person name="Basham D."/>
            <person name="Brooks K."/>
            <person name="Chillingworth T."/>
            <person name="Connerton P."/>
            <person name="Cronin A."/>
            <person name="Davis P."/>
            <person name="Davies R.M."/>
            <person name="Dowd L."/>
            <person name="White N."/>
            <person name="Farrar J."/>
            <person name="Feltwell T."/>
            <person name="Hamlin N."/>
            <person name="Haque A."/>
            <person name="Hien T.T."/>
            <person name="Holroyd S."/>
            <person name="Jagels K."/>
            <person name="Krogh A."/>
            <person name="Larsen T.S."/>
            <person name="Leather S."/>
            <person name="Moule S."/>
            <person name="O'Gaora P."/>
            <person name="Parry C."/>
            <person name="Quail M.A."/>
            <person name="Rutherford K.M."/>
            <person name="Simmonds M."/>
            <person name="Skelton J."/>
            <person name="Stevens K."/>
            <person name="Whitehead S."/>
            <person name="Barrell B.G."/>
        </authorList>
    </citation>
    <scope>NUCLEOTIDE SEQUENCE [LARGE SCALE GENOMIC DNA]</scope>
    <source>
        <strain>CT18</strain>
    </source>
</reference>
<reference key="4">
    <citation type="journal article" date="2003" name="J. Bacteriol.">
        <title>Comparative genomics of Salmonella enterica serovar Typhi strains Ty2 and CT18.</title>
        <authorList>
            <person name="Deng W."/>
            <person name="Liou S.-R."/>
            <person name="Plunkett G. III"/>
            <person name="Mayhew G.F."/>
            <person name="Rose D.J."/>
            <person name="Burland V."/>
            <person name="Kodoyianni V."/>
            <person name="Schwartz D.C."/>
            <person name="Blattner F.R."/>
        </authorList>
    </citation>
    <scope>NUCLEOTIDE SEQUENCE [LARGE SCALE GENOMIC DNA]</scope>
    <source>
        <strain>ATCC 700931 / Ty2</strain>
    </source>
</reference>
<reference key="5">
    <citation type="journal article" date="2003" name="J. Biol. Chem.">
        <title>High resolution X-ray structure of tyvelose epimerase from Salmonella typhi.</title>
        <authorList>
            <person name="Koropatkin N.M."/>
            <person name="Liu H.-W."/>
            <person name="Holden H.M."/>
        </authorList>
    </citation>
    <scope>X-RAY CRYSTALLOGRAPHY (1.5 ANGSTROMS) OF 2-338 IN COMPLEX WITH NAD AND SUBSTRATE</scope>
    <scope>SUBUNIT</scope>
</reference>
<comment type="function">
    <text>Catalyzes the isomeration of CDP-paratose to CDP-tyvelose.</text>
</comment>
<comment type="catalytic activity">
    <reaction>
        <text>CDP-alpha-D-paratose = CDP-3,6-dideoxy-alpha-D-mannose</text>
        <dbReference type="Rhea" id="RHEA:21656"/>
        <dbReference type="ChEBI" id="CHEBI:70785"/>
        <dbReference type="ChEBI" id="CHEBI:88041"/>
        <dbReference type="EC" id="5.1.3.10"/>
    </reaction>
</comment>
<comment type="cofactor">
    <cofactor>
        <name>NAD(+)</name>
        <dbReference type="ChEBI" id="CHEBI:57540"/>
    </cofactor>
    <text>Binds 1 NAD(+) per subunit.</text>
</comment>
<comment type="pathway">
    <text>Nucleotide-sugar biosynthesis; CDP-3,6-dideoxy-D-mannose biosynthesis; CDP-3,6-dideoxy-D-mannose from CTP and alpha-D-glucose 1-phosphate: step 5/5.</text>
</comment>
<comment type="subunit">
    <text evidence="1">Homotetramer.</text>
</comment>
<comment type="similarity">
    <text evidence="2">Belongs to the NAD(P)-dependent epimerase/dehydratase family.</text>
</comment>